<evidence type="ECO:0000255" key="1">
    <source>
        <dbReference type="HAMAP-Rule" id="MF_00292"/>
    </source>
</evidence>
<evidence type="ECO:0000305" key="2"/>
<sequence>MSEKEKSQAQSSVIEEFGFPAEVIQILDRTGVTGEVTQVRVRVLEGRDKGRILTRNVKGPVRLGDILILRETEREARKLTTKR</sequence>
<proteinExistence type="inferred from homology"/>
<organism>
    <name type="scientific">Sulfurisphaera tokodaii (strain DSM 16993 / JCM 10545 / NBRC 100140 / 7)</name>
    <name type="common">Sulfolobus tokodaii</name>
    <dbReference type="NCBI Taxonomy" id="273063"/>
    <lineage>
        <taxon>Archaea</taxon>
        <taxon>Thermoproteota</taxon>
        <taxon>Thermoprotei</taxon>
        <taxon>Sulfolobales</taxon>
        <taxon>Sulfolobaceae</taxon>
        <taxon>Sulfurisphaera</taxon>
    </lineage>
</organism>
<keyword id="KW-1185">Reference proteome</keyword>
<keyword id="KW-0687">Ribonucleoprotein</keyword>
<keyword id="KW-0689">Ribosomal protein</keyword>
<dbReference type="EMBL" id="BA000023">
    <property type="protein sequence ID" value="BAB65250.1"/>
    <property type="molecule type" value="Genomic_DNA"/>
</dbReference>
<dbReference type="RefSeq" id="WP_010978233.1">
    <property type="nucleotide sequence ID" value="NC_003106.2"/>
</dbReference>
<dbReference type="SMR" id="Q975Z8"/>
<dbReference type="STRING" id="273063.STK_02807"/>
<dbReference type="KEGG" id="sto:STK_02807"/>
<dbReference type="PATRIC" id="fig|273063.9.peg.334"/>
<dbReference type="eggNOG" id="arCOG04314">
    <property type="taxonomic scope" value="Archaea"/>
</dbReference>
<dbReference type="OrthoDB" id="7620at2157"/>
<dbReference type="Proteomes" id="UP000001015">
    <property type="component" value="Chromosome"/>
</dbReference>
<dbReference type="GO" id="GO:0022627">
    <property type="term" value="C:cytosolic small ribosomal subunit"/>
    <property type="evidence" value="ECO:0007669"/>
    <property type="project" value="TreeGrafter"/>
</dbReference>
<dbReference type="GO" id="GO:0003735">
    <property type="term" value="F:structural constituent of ribosome"/>
    <property type="evidence" value="ECO:0007669"/>
    <property type="project" value="InterPro"/>
</dbReference>
<dbReference type="GO" id="GO:0030490">
    <property type="term" value="P:maturation of SSU-rRNA"/>
    <property type="evidence" value="ECO:0007669"/>
    <property type="project" value="TreeGrafter"/>
</dbReference>
<dbReference type="GO" id="GO:0000028">
    <property type="term" value="P:ribosomal small subunit assembly"/>
    <property type="evidence" value="ECO:0007669"/>
    <property type="project" value="TreeGrafter"/>
</dbReference>
<dbReference type="GO" id="GO:0006412">
    <property type="term" value="P:translation"/>
    <property type="evidence" value="ECO:0007669"/>
    <property type="project" value="UniProtKB-UniRule"/>
</dbReference>
<dbReference type="CDD" id="cd04457">
    <property type="entry name" value="S1_S28E"/>
    <property type="match status" value="1"/>
</dbReference>
<dbReference type="FunFam" id="2.40.50.140:FF:000145">
    <property type="entry name" value="30S ribosomal protein S28e"/>
    <property type="match status" value="1"/>
</dbReference>
<dbReference type="Gene3D" id="2.40.50.140">
    <property type="entry name" value="Nucleic acid-binding proteins"/>
    <property type="match status" value="1"/>
</dbReference>
<dbReference type="HAMAP" id="MF_00292">
    <property type="entry name" value="Ribosomal_eS28"/>
    <property type="match status" value="1"/>
</dbReference>
<dbReference type="InterPro" id="IPR012340">
    <property type="entry name" value="NA-bd_OB-fold"/>
</dbReference>
<dbReference type="InterPro" id="IPR000289">
    <property type="entry name" value="Ribosomal_eS28"/>
</dbReference>
<dbReference type="InterPro" id="IPR028626">
    <property type="entry name" value="Ribosomal_eS28_CS"/>
</dbReference>
<dbReference type="NCBIfam" id="NF003080">
    <property type="entry name" value="PRK04007.1"/>
    <property type="match status" value="1"/>
</dbReference>
<dbReference type="PANTHER" id="PTHR10769">
    <property type="entry name" value="40S RIBOSOMAL PROTEIN S28"/>
    <property type="match status" value="1"/>
</dbReference>
<dbReference type="PANTHER" id="PTHR10769:SF3">
    <property type="entry name" value="SMALL RIBOSOMAL SUBUNIT PROTEIN ES28"/>
    <property type="match status" value="1"/>
</dbReference>
<dbReference type="Pfam" id="PF01200">
    <property type="entry name" value="Ribosomal_S28e"/>
    <property type="match status" value="1"/>
</dbReference>
<dbReference type="SUPFAM" id="SSF50249">
    <property type="entry name" value="Nucleic acid-binding proteins"/>
    <property type="match status" value="1"/>
</dbReference>
<dbReference type="PROSITE" id="PS00961">
    <property type="entry name" value="RIBOSOMAL_S28E"/>
    <property type="match status" value="1"/>
</dbReference>
<gene>
    <name evidence="1" type="primary">rps28e</name>
    <name type="ordered locus">STK_02807</name>
    <name type="ORF">STS040</name>
</gene>
<reference key="1">
    <citation type="journal article" date="2001" name="DNA Res.">
        <title>Complete genome sequence of an aerobic thermoacidophilic Crenarchaeon, Sulfolobus tokodaii strain7.</title>
        <authorList>
            <person name="Kawarabayasi Y."/>
            <person name="Hino Y."/>
            <person name="Horikawa H."/>
            <person name="Jin-no K."/>
            <person name="Takahashi M."/>
            <person name="Sekine M."/>
            <person name="Baba S."/>
            <person name="Ankai A."/>
            <person name="Kosugi H."/>
            <person name="Hosoyama A."/>
            <person name="Fukui S."/>
            <person name="Nagai Y."/>
            <person name="Nishijima K."/>
            <person name="Otsuka R."/>
            <person name="Nakazawa H."/>
            <person name="Takamiya M."/>
            <person name="Kato Y."/>
            <person name="Yoshizawa T."/>
            <person name="Tanaka T."/>
            <person name="Kudoh Y."/>
            <person name="Yamazaki J."/>
            <person name="Kushida N."/>
            <person name="Oguchi A."/>
            <person name="Aoki K."/>
            <person name="Masuda S."/>
            <person name="Yanagii M."/>
            <person name="Nishimura M."/>
            <person name="Yamagishi A."/>
            <person name="Oshima T."/>
            <person name="Kikuchi H."/>
        </authorList>
    </citation>
    <scope>NUCLEOTIDE SEQUENCE [LARGE SCALE GENOMIC DNA]</scope>
    <source>
        <strain>DSM 16993 / JCM 10545 / NBRC 100140 / 7</strain>
    </source>
</reference>
<feature type="chain" id="PRO_0000136862" description="Small ribosomal subunit protein eS28">
    <location>
        <begin position="1"/>
        <end position="83"/>
    </location>
</feature>
<name>RS28_SULTO</name>
<accession>Q975Z8</accession>
<protein>
    <recommendedName>
        <fullName evidence="1">Small ribosomal subunit protein eS28</fullName>
    </recommendedName>
    <alternativeName>
        <fullName evidence="2">30S ribosomal protein S28e</fullName>
    </alternativeName>
</protein>
<comment type="similarity">
    <text evidence="1">Belongs to the eukaryotic ribosomal protein eS28 family.</text>
</comment>